<gene>
    <name evidence="1" type="primary">groES</name>
    <name evidence="1" type="synonym">groS</name>
    <name type="ordered locus">HAPS_2057</name>
</gene>
<keyword id="KW-0143">Chaperone</keyword>
<keyword id="KW-0963">Cytoplasm</keyword>
<keyword id="KW-1185">Reference proteome</keyword>
<dbReference type="EMBL" id="CP001321">
    <property type="protein sequence ID" value="ACL33516.1"/>
    <property type="molecule type" value="Genomic_DNA"/>
</dbReference>
<dbReference type="RefSeq" id="WP_005713186.1">
    <property type="nucleotide sequence ID" value="NC_011852.1"/>
</dbReference>
<dbReference type="SMR" id="B8F864"/>
<dbReference type="STRING" id="557723.HAPS_2057"/>
<dbReference type="KEGG" id="hap:HAPS_2057"/>
<dbReference type="HOGENOM" id="CLU_132825_1_1_6"/>
<dbReference type="Proteomes" id="UP000006743">
    <property type="component" value="Chromosome"/>
</dbReference>
<dbReference type="GO" id="GO:0005737">
    <property type="term" value="C:cytoplasm"/>
    <property type="evidence" value="ECO:0007669"/>
    <property type="project" value="UniProtKB-SubCell"/>
</dbReference>
<dbReference type="GO" id="GO:0005524">
    <property type="term" value="F:ATP binding"/>
    <property type="evidence" value="ECO:0007669"/>
    <property type="project" value="InterPro"/>
</dbReference>
<dbReference type="GO" id="GO:0046872">
    <property type="term" value="F:metal ion binding"/>
    <property type="evidence" value="ECO:0007669"/>
    <property type="project" value="TreeGrafter"/>
</dbReference>
<dbReference type="GO" id="GO:0044183">
    <property type="term" value="F:protein folding chaperone"/>
    <property type="evidence" value="ECO:0007669"/>
    <property type="project" value="InterPro"/>
</dbReference>
<dbReference type="GO" id="GO:0051087">
    <property type="term" value="F:protein-folding chaperone binding"/>
    <property type="evidence" value="ECO:0007669"/>
    <property type="project" value="TreeGrafter"/>
</dbReference>
<dbReference type="GO" id="GO:0051082">
    <property type="term" value="F:unfolded protein binding"/>
    <property type="evidence" value="ECO:0007669"/>
    <property type="project" value="TreeGrafter"/>
</dbReference>
<dbReference type="GO" id="GO:0051085">
    <property type="term" value="P:chaperone cofactor-dependent protein refolding"/>
    <property type="evidence" value="ECO:0007669"/>
    <property type="project" value="TreeGrafter"/>
</dbReference>
<dbReference type="CDD" id="cd00320">
    <property type="entry name" value="cpn10"/>
    <property type="match status" value="1"/>
</dbReference>
<dbReference type="FunFam" id="2.30.33.40:FF:000001">
    <property type="entry name" value="10 kDa chaperonin"/>
    <property type="match status" value="1"/>
</dbReference>
<dbReference type="Gene3D" id="2.30.33.40">
    <property type="entry name" value="GroES chaperonin"/>
    <property type="match status" value="1"/>
</dbReference>
<dbReference type="HAMAP" id="MF_00580">
    <property type="entry name" value="CH10"/>
    <property type="match status" value="1"/>
</dbReference>
<dbReference type="InterPro" id="IPR020818">
    <property type="entry name" value="Chaperonin_GroES"/>
</dbReference>
<dbReference type="InterPro" id="IPR037124">
    <property type="entry name" value="Chaperonin_GroES_sf"/>
</dbReference>
<dbReference type="InterPro" id="IPR018369">
    <property type="entry name" value="Chaprnonin_Cpn10_CS"/>
</dbReference>
<dbReference type="InterPro" id="IPR011032">
    <property type="entry name" value="GroES-like_sf"/>
</dbReference>
<dbReference type="NCBIfam" id="NF001526">
    <property type="entry name" value="PRK00364.1-1"/>
    <property type="match status" value="1"/>
</dbReference>
<dbReference type="NCBIfam" id="NF001527">
    <property type="entry name" value="PRK00364.1-2"/>
    <property type="match status" value="1"/>
</dbReference>
<dbReference type="NCBIfam" id="NF001531">
    <property type="entry name" value="PRK00364.2-2"/>
    <property type="match status" value="1"/>
</dbReference>
<dbReference type="PANTHER" id="PTHR10772">
    <property type="entry name" value="10 KDA HEAT SHOCK PROTEIN"/>
    <property type="match status" value="1"/>
</dbReference>
<dbReference type="PANTHER" id="PTHR10772:SF58">
    <property type="entry name" value="CO-CHAPERONIN GROES"/>
    <property type="match status" value="1"/>
</dbReference>
<dbReference type="Pfam" id="PF00166">
    <property type="entry name" value="Cpn10"/>
    <property type="match status" value="1"/>
</dbReference>
<dbReference type="PRINTS" id="PR00297">
    <property type="entry name" value="CHAPERONIN10"/>
</dbReference>
<dbReference type="SMART" id="SM00883">
    <property type="entry name" value="Cpn10"/>
    <property type="match status" value="1"/>
</dbReference>
<dbReference type="SUPFAM" id="SSF50129">
    <property type="entry name" value="GroES-like"/>
    <property type="match status" value="1"/>
</dbReference>
<dbReference type="PROSITE" id="PS00681">
    <property type="entry name" value="CHAPERONINS_CPN10"/>
    <property type="match status" value="1"/>
</dbReference>
<accession>B8F864</accession>
<evidence type="ECO:0000255" key="1">
    <source>
        <dbReference type="HAMAP-Rule" id="MF_00580"/>
    </source>
</evidence>
<protein>
    <recommendedName>
        <fullName evidence="1">Co-chaperonin GroES</fullName>
    </recommendedName>
    <alternativeName>
        <fullName evidence="1">10 kDa chaperonin</fullName>
    </alternativeName>
    <alternativeName>
        <fullName evidence="1">Chaperonin-10</fullName>
        <shortName evidence="1">Cpn10</shortName>
    </alternativeName>
</protein>
<name>CH10_GLAP5</name>
<feature type="chain" id="PRO_1000146907" description="Co-chaperonin GroES">
    <location>
        <begin position="1"/>
        <end position="95"/>
    </location>
</feature>
<comment type="function">
    <text evidence="1">Together with the chaperonin GroEL, plays an essential role in assisting protein folding. The GroEL-GroES system forms a nano-cage that allows encapsulation of the non-native substrate proteins and provides a physical environment optimized to promote and accelerate protein folding. GroES binds to the apical surface of the GroEL ring, thereby capping the opening of the GroEL channel.</text>
</comment>
<comment type="subunit">
    <text evidence="1">Heptamer of 7 subunits arranged in a ring. Interacts with the chaperonin GroEL.</text>
</comment>
<comment type="subcellular location">
    <subcellularLocation>
        <location evidence="1">Cytoplasm</location>
    </subcellularLocation>
</comment>
<comment type="similarity">
    <text evidence="1">Belongs to the GroES chaperonin family.</text>
</comment>
<sequence>MKIRPLHDKVILKREEIETKSAGGIVLTGSAATKSTRGTVIAVGNGRTLDNGTVLPLNVKVGDVVIFNEYGVKEEKIDGETVLILSEDNILAIVE</sequence>
<organism>
    <name type="scientific">Glaesserella parasuis serovar 5 (strain SH0165)</name>
    <name type="common">Haemophilus parasuis</name>
    <dbReference type="NCBI Taxonomy" id="557723"/>
    <lineage>
        <taxon>Bacteria</taxon>
        <taxon>Pseudomonadati</taxon>
        <taxon>Pseudomonadota</taxon>
        <taxon>Gammaproteobacteria</taxon>
        <taxon>Pasteurellales</taxon>
        <taxon>Pasteurellaceae</taxon>
        <taxon>Glaesserella</taxon>
    </lineage>
</organism>
<reference key="1">
    <citation type="journal article" date="2009" name="J. Bacteriol.">
        <title>Complete genome sequence of Haemophilus parasuis SH0165.</title>
        <authorList>
            <person name="Yue M."/>
            <person name="Yang F."/>
            <person name="Yang J."/>
            <person name="Bei W."/>
            <person name="Cai X."/>
            <person name="Chen L."/>
            <person name="Dong J."/>
            <person name="Zhou R."/>
            <person name="Jin M."/>
            <person name="Jin Q."/>
            <person name="Chen H."/>
        </authorList>
    </citation>
    <scope>NUCLEOTIDE SEQUENCE [LARGE SCALE GENOMIC DNA]</scope>
    <source>
        <strain>SH0165</strain>
    </source>
</reference>
<proteinExistence type="inferred from homology"/>